<proteinExistence type="evidence at transcript level"/>
<gene>
    <name type="primary">EMB2261</name>
    <name type="synonym">PCMP-H78</name>
    <name type="ordered locus">At3g49170</name>
    <name type="ORF">F2K15.30</name>
</gene>
<protein>
    <recommendedName>
        <fullName>Pentatricopeptide repeat-containing protein At3g49170, chloroplastic</fullName>
    </recommendedName>
    <alternativeName>
        <fullName>Protein EMBRYO DEFECTIVE 2261</fullName>
    </alternativeName>
</protein>
<evidence type="ECO:0000255" key="1"/>
<evidence type="ECO:0000269" key="2">
    <source>
    </source>
</evidence>
<evidence type="ECO:0000305" key="3"/>
<name>PP272_ARATH</name>
<accession>Q5G1T1</accession>
<accession>Q9M3B5</accession>
<dbReference type="EMBL" id="AY864347">
    <property type="protein sequence ID" value="AAW62962.1"/>
    <property type="molecule type" value="mRNA"/>
</dbReference>
<dbReference type="EMBL" id="AY864348">
    <property type="protein sequence ID" value="AAW62963.1"/>
    <property type="molecule type" value="Genomic_DNA"/>
</dbReference>
<dbReference type="EMBL" id="AL132956">
    <property type="protein sequence ID" value="CAB66396.1"/>
    <property type="status" value="ALT_SEQ"/>
    <property type="molecule type" value="Genomic_DNA"/>
</dbReference>
<dbReference type="EMBL" id="CP002686">
    <property type="protein sequence ID" value="AEE78507.1"/>
    <property type="molecule type" value="Genomic_DNA"/>
</dbReference>
<dbReference type="PIR" id="T45822">
    <property type="entry name" value="T45822"/>
</dbReference>
<dbReference type="RefSeq" id="NP_190486.2">
    <property type="nucleotide sequence ID" value="NM_114776.4"/>
</dbReference>
<dbReference type="SMR" id="Q5G1T1"/>
<dbReference type="FunCoup" id="Q5G1T1">
    <property type="interactions" value="44"/>
</dbReference>
<dbReference type="STRING" id="3702.Q5G1T1"/>
<dbReference type="iPTMnet" id="Q5G1T1"/>
<dbReference type="PaxDb" id="3702-AT3G49170.1"/>
<dbReference type="ProteomicsDB" id="249194"/>
<dbReference type="EnsemblPlants" id="AT3G49170.1">
    <property type="protein sequence ID" value="AT3G49170.1"/>
    <property type="gene ID" value="AT3G49170"/>
</dbReference>
<dbReference type="GeneID" id="824078"/>
<dbReference type="Gramene" id="AT3G49170.1">
    <property type="protein sequence ID" value="AT3G49170.1"/>
    <property type="gene ID" value="AT3G49170"/>
</dbReference>
<dbReference type="KEGG" id="ath:AT3G49170"/>
<dbReference type="Araport" id="AT3G49170"/>
<dbReference type="TAIR" id="AT3G49170">
    <property type="gene designation" value="EMB2261"/>
</dbReference>
<dbReference type="eggNOG" id="KOG4197">
    <property type="taxonomic scope" value="Eukaryota"/>
</dbReference>
<dbReference type="HOGENOM" id="CLU_002706_15_0_1"/>
<dbReference type="InParanoid" id="Q5G1T1"/>
<dbReference type="OMA" id="VMSWTAV"/>
<dbReference type="PhylomeDB" id="Q5G1T1"/>
<dbReference type="PRO" id="PR:Q5G1T1"/>
<dbReference type="Proteomes" id="UP000006548">
    <property type="component" value="Chromosome 3"/>
</dbReference>
<dbReference type="ExpressionAtlas" id="Q5G1T1">
    <property type="expression patterns" value="baseline and differential"/>
</dbReference>
<dbReference type="GO" id="GO:0009507">
    <property type="term" value="C:chloroplast"/>
    <property type="evidence" value="ECO:0007669"/>
    <property type="project" value="UniProtKB-SubCell"/>
</dbReference>
<dbReference type="GO" id="GO:0003729">
    <property type="term" value="F:mRNA binding"/>
    <property type="evidence" value="ECO:0000314"/>
    <property type="project" value="TAIR"/>
</dbReference>
<dbReference type="GO" id="GO:0008270">
    <property type="term" value="F:zinc ion binding"/>
    <property type="evidence" value="ECO:0007669"/>
    <property type="project" value="InterPro"/>
</dbReference>
<dbReference type="GO" id="GO:0009793">
    <property type="term" value="P:embryo development ending in seed dormancy"/>
    <property type="evidence" value="ECO:0000315"/>
    <property type="project" value="TAIR"/>
</dbReference>
<dbReference type="GO" id="GO:0009451">
    <property type="term" value="P:RNA modification"/>
    <property type="evidence" value="ECO:0007669"/>
    <property type="project" value="InterPro"/>
</dbReference>
<dbReference type="FunFam" id="1.25.40.10:FF:000366">
    <property type="entry name" value="Pentatricopeptide (PPR) repeat-containing protein"/>
    <property type="match status" value="1"/>
</dbReference>
<dbReference type="FunFam" id="1.25.40.10:FF:000798">
    <property type="entry name" value="Pentatricopeptide repeat-containing protein At3g49170, chloroplastic"/>
    <property type="match status" value="1"/>
</dbReference>
<dbReference type="Gene3D" id="1.25.40.10">
    <property type="entry name" value="Tetratricopeptide repeat domain"/>
    <property type="match status" value="6"/>
</dbReference>
<dbReference type="InterPro" id="IPR032867">
    <property type="entry name" value="DYW_dom"/>
</dbReference>
<dbReference type="InterPro" id="IPR046848">
    <property type="entry name" value="E_motif"/>
</dbReference>
<dbReference type="InterPro" id="IPR046849">
    <property type="entry name" value="Eplus_motif"/>
</dbReference>
<dbReference type="InterPro" id="IPR002885">
    <property type="entry name" value="Pentatricopeptide_rpt"/>
</dbReference>
<dbReference type="InterPro" id="IPR046960">
    <property type="entry name" value="PPR_At4g14850-like_plant"/>
</dbReference>
<dbReference type="InterPro" id="IPR011990">
    <property type="entry name" value="TPR-like_helical_dom_sf"/>
</dbReference>
<dbReference type="NCBIfam" id="TIGR00756">
    <property type="entry name" value="PPR"/>
    <property type="match status" value="6"/>
</dbReference>
<dbReference type="PANTHER" id="PTHR47926">
    <property type="entry name" value="PENTATRICOPEPTIDE REPEAT-CONTAINING PROTEIN"/>
    <property type="match status" value="1"/>
</dbReference>
<dbReference type="PANTHER" id="PTHR47926:SF522">
    <property type="entry name" value="TETRATRICOPEPTIDE REPEAT-LIKE SUPERFAMILY PROTEIN"/>
    <property type="match status" value="1"/>
</dbReference>
<dbReference type="Pfam" id="PF14432">
    <property type="entry name" value="DYW_deaminase"/>
    <property type="match status" value="1"/>
</dbReference>
<dbReference type="Pfam" id="PF20431">
    <property type="entry name" value="E_motif"/>
    <property type="match status" value="1"/>
</dbReference>
<dbReference type="Pfam" id="PF20430">
    <property type="entry name" value="Eplus_motif"/>
    <property type="match status" value="1"/>
</dbReference>
<dbReference type="Pfam" id="PF01535">
    <property type="entry name" value="PPR"/>
    <property type="match status" value="2"/>
</dbReference>
<dbReference type="Pfam" id="PF13041">
    <property type="entry name" value="PPR_2"/>
    <property type="match status" value="5"/>
</dbReference>
<dbReference type="SUPFAM" id="SSF48452">
    <property type="entry name" value="TPR-like"/>
    <property type="match status" value="1"/>
</dbReference>
<dbReference type="PROSITE" id="PS51375">
    <property type="entry name" value="PPR"/>
    <property type="match status" value="18"/>
</dbReference>
<keyword id="KW-0150">Chloroplast</keyword>
<keyword id="KW-0934">Plastid</keyword>
<keyword id="KW-1185">Reference proteome</keyword>
<keyword id="KW-0677">Repeat</keyword>
<keyword id="KW-0809">Transit peptide</keyword>
<organism>
    <name type="scientific">Arabidopsis thaliana</name>
    <name type="common">Mouse-ear cress</name>
    <dbReference type="NCBI Taxonomy" id="3702"/>
    <lineage>
        <taxon>Eukaryota</taxon>
        <taxon>Viridiplantae</taxon>
        <taxon>Streptophyta</taxon>
        <taxon>Embryophyta</taxon>
        <taxon>Tracheophyta</taxon>
        <taxon>Spermatophyta</taxon>
        <taxon>Magnoliopsida</taxon>
        <taxon>eudicotyledons</taxon>
        <taxon>Gunneridae</taxon>
        <taxon>Pentapetalae</taxon>
        <taxon>rosids</taxon>
        <taxon>malvids</taxon>
        <taxon>Brassicales</taxon>
        <taxon>Brassicaceae</taxon>
        <taxon>Camelineae</taxon>
        <taxon>Arabidopsis</taxon>
    </lineage>
</organism>
<comment type="function">
    <text evidence="2">May play a role in embryogenesis.</text>
</comment>
<comment type="subcellular location">
    <subcellularLocation>
        <location evidence="3">Plastid</location>
        <location evidence="3">Chloroplast</location>
    </subcellularLocation>
</comment>
<comment type="similarity">
    <text evidence="3">Belongs to the PPR family. PCMP-H subfamily.</text>
</comment>
<comment type="sequence caution" evidence="3">
    <conflict type="erroneous gene model prediction">
        <sequence resource="EMBL-CDS" id="CAB66396"/>
    </conflict>
</comment>
<comment type="online information" name="Pentatricopeptide repeat proteins">
    <link uri="https://ppr.plantenergy.uwa.edu.au"/>
</comment>
<reference key="1">
    <citation type="journal article" date="2005" name="Planta">
        <title>Arabidopsis emb175 and other ppr knockout mutants reveal essential roles for pentatricopeptide repeat (PPR) proteins in plant embryogenesis.</title>
        <authorList>
            <person name="Cushing D.A."/>
            <person name="Forsthoefel N.R."/>
            <person name="Gestaut D.R."/>
            <person name="Vernon D.M."/>
        </authorList>
    </citation>
    <scope>NUCLEOTIDE SEQUENCE [GENOMIC DNA / MRNA]</scope>
    <scope>FUNCTION</scope>
</reference>
<reference key="2">
    <citation type="journal article" date="2000" name="Nature">
        <title>Sequence and analysis of chromosome 3 of the plant Arabidopsis thaliana.</title>
        <authorList>
            <person name="Salanoubat M."/>
            <person name="Lemcke K."/>
            <person name="Rieger M."/>
            <person name="Ansorge W."/>
            <person name="Unseld M."/>
            <person name="Fartmann B."/>
            <person name="Valle G."/>
            <person name="Bloecker H."/>
            <person name="Perez-Alonso M."/>
            <person name="Obermaier B."/>
            <person name="Delseny M."/>
            <person name="Boutry M."/>
            <person name="Grivell L.A."/>
            <person name="Mache R."/>
            <person name="Puigdomenech P."/>
            <person name="De Simone V."/>
            <person name="Choisne N."/>
            <person name="Artiguenave F."/>
            <person name="Robert C."/>
            <person name="Brottier P."/>
            <person name="Wincker P."/>
            <person name="Cattolico L."/>
            <person name="Weissenbach J."/>
            <person name="Saurin W."/>
            <person name="Quetier F."/>
            <person name="Schaefer M."/>
            <person name="Mueller-Auer S."/>
            <person name="Gabel C."/>
            <person name="Fuchs M."/>
            <person name="Benes V."/>
            <person name="Wurmbach E."/>
            <person name="Drzonek H."/>
            <person name="Erfle H."/>
            <person name="Jordan N."/>
            <person name="Bangert S."/>
            <person name="Wiedelmann R."/>
            <person name="Kranz H."/>
            <person name="Voss H."/>
            <person name="Holland R."/>
            <person name="Brandt P."/>
            <person name="Nyakatura G."/>
            <person name="Vezzi A."/>
            <person name="D'Angelo M."/>
            <person name="Pallavicini A."/>
            <person name="Toppo S."/>
            <person name="Simionati B."/>
            <person name="Conrad A."/>
            <person name="Hornischer K."/>
            <person name="Kauer G."/>
            <person name="Loehnert T.-H."/>
            <person name="Nordsiek G."/>
            <person name="Reichelt J."/>
            <person name="Scharfe M."/>
            <person name="Schoen O."/>
            <person name="Bargues M."/>
            <person name="Terol J."/>
            <person name="Climent J."/>
            <person name="Navarro P."/>
            <person name="Collado C."/>
            <person name="Perez-Perez A."/>
            <person name="Ottenwaelder B."/>
            <person name="Duchemin D."/>
            <person name="Cooke R."/>
            <person name="Laudie M."/>
            <person name="Berger-Llauro C."/>
            <person name="Purnelle B."/>
            <person name="Masuy D."/>
            <person name="de Haan M."/>
            <person name="Maarse A.C."/>
            <person name="Alcaraz J.-P."/>
            <person name="Cottet A."/>
            <person name="Casacuberta E."/>
            <person name="Monfort A."/>
            <person name="Argiriou A."/>
            <person name="Flores M."/>
            <person name="Liguori R."/>
            <person name="Vitale D."/>
            <person name="Mannhaupt G."/>
            <person name="Haase D."/>
            <person name="Schoof H."/>
            <person name="Rudd S."/>
            <person name="Zaccaria P."/>
            <person name="Mewes H.-W."/>
            <person name="Mayer K.F.X."/>
            <person name="Kaul S."/>
            <person name="Town C.D."/>
            <person name="Koo H.L."/>
            <person name="Tallon L.J."/>
            <person name="Jenkins J."/>
            <person name="Rooney T."/>
            <person name="Rizzo M."/>
            <person name="Walts A."/>
            <person name="Utterback T."/>
            <person name="Fujii C.Y."/>
            <person name="Shea T.P."/>
            <person name="Creasy T.H."/>
            <person name="Haas B."/>
            <person name="Maiti R."/>
            <person name="Wu D."/>
            <person name="Peterson J."/>
            <person name="Van Aken S."/>
            <person name="Pai G."/>
            <person name="Militscher J."/>
            <person name="Sellers P."/>
            <person name="Gill J.E."/>
            <person name="Feldblyum T.V."/>
            <person name="Preuss D."/>
            <person name="Lin X."/>
            <person name="Nierman W.C."/>
            <person name="Salzberg S.L."/>
            <person name="White O."/>
            <person name="Venter J.C."/>
            <person name="Fraser C.M."/>
            <person name="Kaneko T."/>
            <person name="Nakamura Y."/>
            <person name="Sato S."/>
            <person name="Kato T."/>
            <person name="Asamizu E."/>
            <person name="Sasamoto S."/>
            <person name="Kimura T."/>
            <person name="Idesawa K."/>
            <person name="Kawashima K."/>
            <person name="Kishida Y."/>
            <person name="Kiyokawa C."/>
            <person name="Kohara M."/>
            <person name="Matsumoto M."/>
            <person name="Matsuno A."/>
            <person name="Muraki A."/>
            <person name="Nakayama S."/>
            <person name="Nakazaki N."/>
            <person name="Shinpo S."/>
            <person name="Takeuchi C."/>
            <person name="Wada T."/>
            <person name="Watanabe A."/>
            <person name="Yamada M."/>
            <person name="Yasuda M."/>
            <person name="Tabata S."/>
        </authorList>
    </citation>
    <scope>NUCLEOTIDE SEQUENCE [LARGE SCALE GENOMIC DNA]</scope>
    <source>
        <strain>cv. Columbia</strain>
    </source>
</reference>
<reference key="3">
    <citation type="journal article" date="2017" name="Plant J.">
        <title>Araport11: a complete reannotation of the Arabidopsis thaliana reference genome.</title>
        <authorList>
            <person name="Cheng C.Y."/>
            <person name="Krishnakumar V."/>
            <person name="Chan A.P."/>
            <person name="Thibaud-Nissen F."/>
            <person name="Schobel S."/>
            <person name="Town C.D."/>
        </authorList>
    </citation>
    <scope>GENOME REANNOTATION</scope>
    <source>
        <strain>cv. Columbia</strain>
    </source>
</reference>
<reference key="4">
    <citation type="journal article" date="2004" name="Plant Cell">
        <title>Genome-wide analysis of Arabidopsis pentatricopeptide repeat proteins reveals their essential role in organelle biogenesis.</title>
        <authorList>
            <person name="Lurin C."/>
            <person name="Andres C."/>
            <person name="Aubourg S."/>
            <person name="Bellaoui M."/>
            <person name="Bitton F."/>
            <person name="Bruyere C."/>
            <person name="Caboche M."/>
            <person name="Debast C."/>
            <person name="Gualberto J."/>
            <person name="Hoffmann B."/>
            <person name="Lecharny A."/>
            <person name="Le Ret M."/>
            <person name="Martin-Magniette M.-L."/>
            <person name="Mireau H."/>
            <person name="Peeters N."/>
            <person name="Renou J.-P."/>
            <person name="Szurek B."/>
            <person name="Taconnat L."/>
            <person name="Small I."/>
        </authorList>
    </citation>
    <scope>GENE FAMILY</scope>
</reference>
<feature type="transit peptide" description="Chloroplast" evidence="1">
    <location>
        <begin position="1"/>
        <end position="50"/>
    </location>
</feature>
<feature type="chain" id="PRO_0000356131" description="Pentatricopeptide repeat-containing protein At3g49170, chloroplastic">
    <location>
        <begin position="51"/>
        <end position="850"/>
    </location>
</feature>
<feature type="repeat" description="PPR 1">
    <location>
        <begin position="61"/>
        <end position="95"/>
    </location>
</feature>
<feature type="repeat" description="PPR 2">
    <location>
        <begin position="96"/>
        <end position="130"/>
    </location>
</feature>
<feature type="repeat" description="PPR 3">
    <location>
        <begin position="131"/>
        <end position="164"/>
    </location>
</feature>
<feature type="repeat" description="PPR 4">
    <location>
        <begin position="165"/>
        <end position="199"/>
    </location>
</feature>
<feature type="repeat" description="PPR 5">
    <location>
        <begin position="201"/>
        <end position="232"/>
    </location>
</feature>
<feature type="repeat" description="PPR 6">
    <location>
        <begin position="233"/>
        <end position="267"/>
    </location>
</feature>
<feature type="repeat" description="PPR 7">
    <location>
        <begin position="268"/>
        <end position="302"/>
    </location>
</feature>
<feature type="repeat" description="PPR 8">
    <location>
        <begin position="303"/>
        <end position="334"/>
    </location>
</feature>
<feature type="repeat" description="PPR 9">
    <location>
        <begin position="335"/>
        <end position="370"/>
    </location>
</feature>
<feature type="repeat" description="PPR 10">
    <location>
        <begin position="372"/>
        <end position="406"/>
    </location>
</feature>
<feature type="repeat" description="PPR 11">
    <location>
        <begin position="407"/>
        <end position="437"/>
    </location>
</feature>
<feature type="repeat" description="PPR 12">
    <location>
        <begin position="438"/>
        <end position="472"/>
    </location>
</feature>
<feature type="repeat" description="PPR 13">
    <location>
        <begin position="473"/>
        <end position="507"/>
    </location>
</feature>
<feature type="repeat" description="PPR 14">
    <location>
        <begin position="508"/>
        <end position="538"/>
    </location>
</feature>
<feature type="repeat" description="PPR 15">
    <location>
        <begin position="539"/>
        <end position="573"/>
    </location>
</feature>
<feature type="repeat" description="PPR 16">
    <location>
        <begin position="574"/>
        <end position="609"/>
    </location>
</feature>
<feature type="repeat" description="PPR 17">
    <location>
        <begin position="610"/>
        <end position="640"/>
    </location>
</feature>
<feature type="region of interest" description="Type E motif">
    <location>
        <begin position="645"/>
        <end position="720"/>
    </location>
</feature>
<feature type="region of interest" description="Type E(+) motif">
    <location>
        <begin position="721"/>
        <end position="751"/>
    </location>
</feature>
<feature type="region of interest" description="Type DYW motif">
    <location>
        <begin position="752"/>
        <end position="850"/>
    </location>
</feature>
<sequence length="850" mass="95496">MAMISFSFPSPAKLPIKSQPSVSNRINVADRLILRHLNAGDLRGAVSALDLMARDGIRPMDSVTFSSLLKSCIRARDFRLGKLVHARLIEFDIEPDSVLYNSLISLYSKSGDSAKAEDVFETMRRFGKRDVVSWSAMMACYGNNGRELDAIKVFVEFLELGLVPNDYCYTAVIRACSNSDFVGVGRVTLGFLMKTGHFESDVCVGCSLIDMFVKGENSFENAYKVFDKMSELNVVTWTLMITRCMQMGFPREAIRFFLDMVLSGFESDKFTLSSVFSACAELENLSLGKQLHSWAIRSGLVDDVECSLVDMYAKCSADGSVDDCRKVFDRMEDHSVMSWTALITGYMKNCNLATEAINLFSEMITQGHVEPNHFTFSSAFKACGNLSDPRVGKQVLGQAFKRGLASNSSVANSVISMFVKSDRMEDAQRAFESLSEKNLVSYNTFLDGTCRNLNFEQAFKLLSEITERELGVSAFTFASLLSGVANVGSIRKGEQIHSQVVKLGLSCNQPVCNALISMYSKCGSIDTASRVFNFMENRNVISWTSMITGFAKHGFAIRVLETFNQMIEEGVKPNEVTYVAILSACSHVGLVSEGWRHFNSMYEDHKIKPKMEHYACMVDLLCRAGLLTDAFEFINTMPFQADVLVWRTFLGACRVHSNTELGKLAARKILELDPNEPAAYIQLSNIYACAGKWEESTEMRRKMKERNLVKEGGCSWIEVGDKIHKFYVGDTAHPNAHQIYDELDRLITEIKRCGYVPDTDLVLHKLEEENDEAEKERLLYQHSEKIAVAFGLISTSKSRPVRVFKNLRVCGDCHNAMKYISTVSGREIVLRDLNRFHHFKDGKCSCNDYW</sequence>